<reference key="1">
    <citation type="submission" date="2007-09" db="EMBL/GenBank/DDBJ databases">
        <title>Complete genome sequence of Rickettsia canadensis.</title>
        <authorList>
            <person name="Madan A."/>
            <person name="Fahey J."/>
            <person name="Helton E."/>
            <person name="Ketteman M."/>
            <person name="Madan A."/>
            <person name="Rodrigues S."/>
            <person name="Sanchez A."/>
            <person name="Whiting M."/>
            <person name="Dasch G."/>
            <person name="Eremeeva M."/>
        </authorList>
    </citation>
    <scope>NUCLEOTIDE SEQUENCE [LARGE SCALE GENOMIC DNA]</scope>
    <source>
        <strain>McKiel</strain>
    </source>
</reference>
<evidence type="ECO:0000255" key="1">
    <source>
        <dbReference type="HAMAP-Rule" id="MF_01367"/>
    </source>
</evidence>
<evidence type="ECO:0000305" key="2"/>
<organism>
    <name type="scientific">Rickettsia canadensis (strain McKiel)</name>
    <dbReference type="NCBI Taxonomy" id="293613"/>
    <lineage>
        <taxon>Bacteria</taxon>
        <taxon>Pseudomonadati</taxon>
        <taxon>Pseudomonadota</taxon>
        <taxon>Alphaproteobacteria</taxon>
        <taxon>Rickettsiales</taxon>
        <taxon>Rickettsiaceae</taxon>
        <taxon>Rickettsieae</taxon>
        <taxon>Rickettsia</taxon>
        <taxon>belli group</taxon>
    </lineage>
</organism>
<protein>
    <recommendedName>
        <fullName evidence="1">Large ribosomal subunit protein uL14</fullName>
    </recommendedName>
    <alternativeName>
        <fullName evidence="2">50S ribosomal protein L14</fullName>
    </alternativeName>
</protein>
<gene>
    <name evidence="1" type="primary">rplN</name>
    <name type="ordered locus">A1E_04320</name>
</gene>
<name>RL14_RICCK</name>
<feature type="chain" id="PRO_1000055690" description="Large ribosomal subunit protein uL14">
    <location>
        <begin position="1"/>
        <end position="122"/>
    </location>
</feature>
<accession>A8EZK6</accession>
<proteinExistence type="inferred from homology"/>
<dbReference type="EMBL" id="CP000409">
    <property type="protein sequence ID" value="ABV73789.1"/>
    <property type="molecule type" value="Genomic_DNA"/>
</dbReference>
<dbReference type="RefSeq" id="WP_012148984.1">
    <property type="nucleotide sequence ID" value="NC_009879.1"/>
</dbReference>
<dbReference type="SMR" id="A8EZK6"/>
<dbReference type="STRING" id="293613.A1E_04320"/>
<dbReference type="KEGG" id="rcm:A1E_04320"/>
<dbReference type="eggNOG" id="COG0093">
    <property type="taxonomic scope" value="Bacteria"/>
</dbReference>
<dbReference type="HOGENOM" id="CLU_095071_2_1_5"/>
<dbReference type="Proteomes" id="UP000007056">
    <property type="component" value="Chromosome"/>
</dbReference>
<dbReference type="GO" id="GO:0022625">
    <property type="term" value="C:cytosolic large ribosomal subunit"/>
    <property type="evidence" value="ECO:0007669"/>
    <property type="project" value="TreeGrafter"/>
</dbReference>
<dbReference type="GO" id="GO:0070180">
    <property type="term" value="F:large ribosomal subunit rRNA binding"/>
    <property type="evidence" value="ECO:0007669"/>
    <property type="project" value="TreeGrafter"/>
</dbReference>
<dbReference type="GO" id="GO:0003735">
    <property type="term" value="F:structural constituent of ribosome"/>
    <property type="evidence" value="ECO:0007669"/>
    <property type="project" value="InterPro"/>
</dbReference>
<dbReference type="GO" id="GO:0006412">
    <property type="term" value="P:translation"/>
    <property type="evidence" value="ECO:0007669"/>
    <property type="project" value="UniProtKB-UniRule"/>
</dbReference>
<dbReference type="CDD" id="cd00337">
    <property type="entry name" value="Ribosomal_uL14"/>
    <property type="match status" value="1"/>
</dbReference>
<dbReference type="FunFam" id="2.40.150.20:FF:000001">
    <property type="entry name" value="50S ribosomal protein L14"/>
    <property type="match status" value="1"/>
</dbReference>
<dbReference type="Gene3D" id="2.40.150.20">
    <property type="entry name" value="Ribosomal protein L14"/>
    <property type="match status" value="1"/>
</dbReference>
<dbReference type="HAMAP" id="MF_01367">
    <property type="entry name" value="Ribosomal_uL14"/>
    <property type="match status" value="1"/>
</dbReference>
<dbReference type="InterPro" id="IPR000218">
    <property type="entry name" value="Ribosomal_uL14"/>
</dbReference>
<dbReference type="InterPro" id="IPR005745">
    <property type="entry name" value="Ribosomal_uL14_bac-type"/>
</dbReference>
<dbReference type="InterPro" id="IPR019972">
    <property type="entry name" value="Ribosomal_uL14_CS"/>
</dbReference>
<dbReference type="InterPro" id="IPR036853">
    <property type="entry name" value="Ribosomal_uL14_sf"/>
</dbReference>
<dbReference type="NCBIfam" id="TIGR01067">
    <property type="entry name" value="rplN_bact"/>
    <property type="match status" value="1"/>
</dbReference>
<dbReference type="PANTHER" id="PTHR11761">
    <property type="entry name" value="50S/60S RIBOSOMAL PROTEIN L14/L23"/>
    <property type="match status" value="1"/>
</dbReference>
<dbReference type="PANTHER" id="PTHR11761:SF3">
    <property type="entry name" value="LARGE RIBOSOMAL SUBUNIT PROTEIN UL14M"/>
    <property type="match status" value="1"/>
</dbReference>
<dbReference type="Pfam" id="PF00238">
    <property type="entry name" value="Ribosomal_L14"/>
    <property type="match status" value="1"/>
</dbReference>
<dbReference type="SMART" id="SM01374">
    <property type="entry name" value="Ribosomal_L14"/>
    <property type="match status" value="1"/>
</dbReference>
<dbReference type="SUPFAM" id="SSF50193">
    <property type="entry name" value="Ribosomal protein L14"/>
    <property type="match status" value="1"/>
</dbReference>
<dbReference type="PROSITE" id="PS00049">
    <property type="entry name" value="RIBOSOMAL_L14"/>
    <property type="match status" value="1"/>
</dbReference>
<sequence length="122" mass="13257">MIQMQSILEVADNSGAKKVMCIKVLGGSHHMVAKLGDVIVISVKEAIPGGKVKKGDVYKGVIVRTKTGVVRPDGSTIKFDKNALVLLNKQDEPIGTRVFGPVTRELRAKKYVRIMSLAEEVL</sequence>
<comment type="function">
    <text evidence="1">Binds to 23S rRNA. Forms part of two intersubunit bridges in the 70S ribosome.</text>
</comment>
<comment type="subunit">
    <text evidence="1">Part of the 50S ribosomal subunit. Forms a cluster with proteins L3 and L19. In the 70S ribosome, L14 and L19 interact and together make contacts with the 16S rRNA in bridges B5 and B8.</text>
</comment>
<comment type="similarity">
    <text evidence="1">Belongs to the universal ribosomal protein uL14 family.</text>
</comment>
<keyword id="KW-0687">Ribonucleoprotein</keyword>
<keyword id="KW-0689">Ribosomal protein</keyword>
<keyword id="KW-0694">RNA-binding</keyword>
<keyword id="KW-0699">rRNA-binding</keyword>